<organism>
    <name type="scientific">Mycobacterium phage L5</name>
    <name type="common">Mycobacteriophage L5</name>
    <dbReference type="NCBI Taxonomy" id="31757"/>
    <lineage>
        <taxon>Viruses</taxon>
        <taxon>Duplodnaviria</taxon>
        <taxon>Heunggongvirae</taxon>
        <taxon>Uroviricota</taxon>
        <taxon>Caudoviricetes</taxon>
        <taxon>Fromanvirus</taxon>
    </lineage>
</organism>
<organismHost>
    <name type="scientific">Mycobacterium</name>
    <dbReference type="NCBI Taxonomy" id="1763"/>
</organismHost>
<dbReference type="EMBL" id="Z18946">
    <property type="protein sequence ID" value="CAA79406.1"/>
    <property type="molecule type" value="Genomic_DNA"/>
</dbReference>
<dbReference type="PIR" id="S30975">
    <property type="entry name" value="S30975"/>
</dbReference>
<dbReference type="RefSeq" id="NP_039694.1">
    <property type="nucleotide sequence ID" value="NC_001335.1"/>
</dbReference>
<dbReference type="SMR" id="Q05239"/>
<dbReference type="GeneID" id="2942939"/>
<dbReference type="KEGG" id="vg:2942939"/>
<dbReference type="OrthoDB" id="26251at10239"/>
<dbReference type="Proteomes" id="UP000002123">
    <property type="component" value="Genome"/>
</dbReference>
<dbReference type="InterPro" id="IPR022704">
    <property type="entry name" value="DUF2746"/>
</dbReference>
<dbReference type="Pfam" id="PF10874">
    <property type="entry name" value="DUF2746"/>
    <property type="match status" value="1"/>
</dbReference>
<feature type="chain" id="PRO_0000164749" description="Gene 30 protein">
    <location>
        <begin position="1"/>
        <end position="101"/>
    </location>
</feature>
<accession>Q05239</accession>
<reference key="1">
    <citation type="journal article" date="1993" name="Mol. Microbiol.">
        <title>DNA sequence, structure and gene expression of mycobacteriophage L5: a phage system for mycobacterial genetics.</title>
        <authorList>
            <person name="Hatfull G.F."/>
            <person name="Sarkis G.J."/>
        </authorList>
    </citation>
    <scope>NUCLEOTIDE SEQUENCE [LARGE SCALE GENOMIC DNA]</scope>
</reference>
<gene>
    <name type="primary">30</name>
</gene>
<proteinExistence type="predicted"/>
<name>VG30_BPML5</name>
<sequence length="101" mass="11474">MTPFNPDSIGDYVTLLGVAFLTFSVPAWFTGRARKHSSDIGEIKEQVCNTHDTNLRDDLDSVKADISDLKEIVLQGFHQVNESINLERRERIEGDRRKEVA</sequence>
<protein>
    <recommendedName>
        <fullName>Gene 30 protein</fullName>
    </recommendedName>
    <alternativeName>
        <fullName>Gp30</fullName>
    </alternativeName>
</protein>
<keyword id="KW-1185">Reference proteome</keyword>